<sequence>MSGPVPSRARVYTDVNTHRPREYWDYESHVVEWGNQDDYQLVRKLGRGKYSEVFEAINITNNEKVVVKILKPVKKKKIKREIKILENLRGGPNIITLADIVKDPVSRTPALVFEHVNNTDFKQLYQTLTDYDIRFYMYEILKALDYCHSMGIMHRDVKPHNVMIDHEHRKLRLIDWGLAEFYHPGQEYNVRVASRYFKGPELLVDYQMYDYSLDMWSLGCMLASMIFRKEPFFHGHDNYDQLVRIAKVLGTEDLYDYIDKYNIELDPRFNDILGRHSRKRWERFVHSENQHLVSPEALDFLDKLLRYDHQSRLTAREAMEHPYFYTVVKDQARMSSAGMAGGSTPVSSANMMSGISSVPTPSPLGPLAGSPVIAAANSLGIPVPAAAGAQQ</sequence>
<keyword id="KW-0002">3D-structure</keyword>
<keyword id="KW-0053">Apoptosis</keyword>
<keyword id="KW-0067">ATP-binding</keyword>
<keyword id="KW-0090">Biological rhythms</keyword>
<keyword id="KW-0131">Cell cycle</keyword>
<keyword id="KW-0903">Direct protein sequencing</keyword>
<keyword id="KW-0418">Kinase</keyword>
<keyword id="KW-0547">Nucleotide-binding</keyword>
<keyword id="KW-0539">Nucleus</keyword>
<keyword id="KW-0597">Phosphoprotein</keyword>
<keyword id="KW-1185">Reference proteome</keyword>
<keyword id="KW-0723">Serine/threonine-protein kinase</keyword>
<keyword id="KW-0804">Transcription</keyword>
<keyword id="KW-0805">Transcription regulation</keyword>
<keyword id="KW-0808">Transferase</keyword>
<keyword id="KW-0879">Wnt signaling pathway</keyword>
<name>CSK21_RAT</name>
<dbReference type="EC" id="2.7.11.1" evidence="6"/>
<dbReference type="EMBL" id="L15618">
    <property type="protein sequence ID" value="AAA74462.1"/>
    <property type="molecule type" value="mRNA"/>
</dbReference>
<dbReference type="EMBL" id="BC091130">
    <property type="protein sequence ID" value="AAH91130.1"/>
    <property type="molecule type" value="mRNA"/>
</dbReference>
<dbReference type="EMBL" id="J02853">
    <property type="status" value="NOT_ANNOTATED_CDS"/>
    <property type="molecule type" value="mRNA"/>
</dbReference>
<dbReference type="PIR" id="B30319">
    <property type="entry name" value="B30319"/>
</dbReference>
<dbReference type="RefSeq" id="NP_001416617.1">
    <property type="nucleotide sequence ID" value="NM_001429688.1"/>
</dbReference>
<dbReference type="RefSeq" id="NP_001416618.1">
    <property type="nucleotide sequence ID" value="NM_001429689.1"/>
</dbReference>
<dbReference type="RefSeq" id="NP_001416619.1">
    <property type="nucleotide sequence ID" value="NM_001429690.1"/>
</dbReference>
<dbReference type="RefSeq" id="NP_001416620.1">
    <property type="nucleotide sequence ID" value="NM_001429691.1"/>
</dbReference>
<dbReference type="RefSeq" id="NP_001416621.1">
    <property type="nucleotide sequence ID" value="NM_001429692.1"/>
</dbReference>
<dbReference type="RefSeq" id="NP_446276.1">
    <property type="nucleotide sequence ID" value="NM_053824.3"/>
</dbReference>
<dbReference type="RefSeq" id="XP_006235282.1">
    <property type="nucleotide sequence ID" value="XM_006235220.3"/>
</dbReference>
<dbReference type="RefSeq" id="XP_006235283.1">
    <property type="nucleotide sequence ID" value="XM_006235221.3"/>
</dbReference>
<dbReference type="RefSeq" id="XP_038960038.1">
    <property type="nucleotide sequence ID" value="XM_039104110.2"/>
</dbReference>
<dbReference type="PDB" id="2R7I">
    <property type="method" value="X-ray"/>
    <property type="resolution" value="3.00 A"/>
    <property type="chains" value="A/B/C/D=1-335"/>
</dbReference>
<dbReference type="PDBsum" id="2R7I"/>
<dbReference type="SMR" id="P19139"/>
<dbReference type="BioGRID" id="250484">
    <property type="interactions" value="8"/>
</dbReference>
<dbReference type="CORUM" id="P19139"/>
<dbReference type="FunCoup" id="P19139">
    <property type="interactions" value="4334"/>
</dbReference>
<dbReference type="IntAct" id="P19139">
    <property type="interactions" value="6"/>
</dbReference>
<dbReference type="MINT" id="P19139"/>
<dbReference type="STRING" id="10116.ENSRNOP00000007558"/>
<dbReference type="BindingDB" id="P19139"/>
<dbReference type="ChEMBL" id="CHEMBL3988629"/>
<dbReference type="GlyGen" id="P19139">
    <property type="glycosylation" value="2 sites, 1 O-linked glycan (1 site)"/>
</dbReference>
<dbReference type="iPTMnet" id="P19139"/>
<dbReference type="PhosphoSitePlus" id="P19139"/>
<dbReference type="jPOST" id="P19139"/>
<dbReference type="PaxDb" id="10116-ENSRNOP00000007558"/>
<dbReference type="Ensembl" id="ENSRNOT00000113326.1">
    <property type="protein sequence ID" value="ENSRNOP00000092799.1"/>
    <property type="gene ID" value="ENSRNOG00000005276.7"/>
</dbReference>
<dbReference type="GeneID" id="116549"/>
<dbReference type="KEGG" id="rno:116549"/>
<dbReference type="UCSC" id="RGD:621663">
    <property type="organism name" value="rat"/>
</dbReference>
<dbReference type="AGR" id="RGD:621663"/>
<dbReference type="CTD" id="1457"/>
<dbReference type="RGD" id="621663">
    <property type="gene designation" value="Csnk2a1"/>
</dbReference>
<dbReference type="eggNOG" id="KOG0668">
    <property type="taxonomic scope" value="Eukaryota"/>
</dbReference>
<dbReference type="GeneTree" id="ENSGT00390000004215"/>
<dbReference type="HOGENOM" id="CLU_000288_70_4_1"/>
<dbReference type="InParanoid" id="P19139"/>
<dbReference type="OMA" id="ECHMIEW"/>
<dbReference type="OrthoDB" id="27130at9989"/>
<dbReference type="PhylomeDB" id="P19139"/>
<dbReference type="TreeFam" id="TF300483"/>
<dbReference type="BRENDA" id="2.7.11.1">
    <property type="organism ID" value="5301"/>
</dbReference>
<dbReference type="Reactome" id="R-RNO-1483191">
    <property type="pathway name" value="Synthesis of PC"/>
</dbReference>
<dbReference type="Reactome" id="R-RNO-201688">
    <property type="pathway name" value="WNT mediated activation of DVL"/>
</dbReference>
<dbReference type="Reactome" id="R-RNO-2514853">
    <property type="pathway name" value="Condensation of Prometaphase Chromosomes"/>
</dbReference>
<dbReference type="Reactome" id="R-RNO-445144">
    <property type="pathway name" value="Signal transduction by L1"/>
</dbReference>
<dbReference type="Reactome" id="R-RNO-6804756">
    <property type="pathway name" value="Regulation of TP53 Activity through Phosphorylation"/>
</dbReference>
<dbReference type="Reactome" id="R-RNO-6814122">
    <property type="pathway name" value="Cooperation of PDCL (PhLP1) and TRiC/CCT in G-protein beta folding"/>
</dbReference>
<dbReference type="Reactome" id="R-RNO-8934903">
    <property type="pathway name" value="Receptor Mediated Mitophagy"/>
</dbReference>
<dbReference type="Reactome" id="R-RNO-8939243">
    <property type="pathway name" value="RUNX1 interacts with co-factors whose precise effect on RUNX1 targets is not known"/>
</dbReference>
<dbReference type="Reactome" id="R-RNO-8948751">
    <property type="pathway name" value="Regulation of PTEN stability and activity"/>
</dbReference>
<dbReference type="EvolutionaryTrace" id="P19139"/>
<dbReference type="PRO" id="PR:P19139"/>
<dbReference type="Proteomes" id="UP000002494">
    <property type="component" value="Chromosome 3"/>
</dbReference>
<dbReference type="Bgee" id="ENSRNOG00000005276">
    <property type="expression patterns" value="Expressed in skeletal muscle tissue and 19 other cell types or tissues"/>
</dbReference>
<dbReference type="GO" id="GO:0000785">
    <property type="term" value="C:chromatin"/>
    <property type="evidence" value="ECO:0000314"/>
    <property type="project" value="RGD"/>
</dbReference>
<dbReference type="GO" id="GO:0005829">
    <property type="term" value="C:cytosol"/>
    <property type="evidence" value="ECO:0000318"/>
    <property type="project" value="GO_Central"/>
</dbReference>
<dbReference type="GO" id="GO:0005634">
    <property type="term" value="C:nucleus"/>
    <property type="evidence" value="ECO:0000266"/>
    <property type="project" value="RGD"/>
</dbReference>
<dbReference type="GO" id="GO:0031519">
    <property type="term" value="C:PcG protein complex"/>
    <property type="evidence" value="ECO:0000266"/>
    <property type="project" value="RGD"/>
</dbReference>
<dbReference type="GO" id="GO:0016605">
    <property type="term" value="C:PML body"/>
    <property type="evidence" value="ECO:0000266"/>
    <property type="project" value="RGD"/>
</dbReference>
<dbReference type="GO" id="GO:0005956">
    <property type="term" value="C:protein kinase CK2 complex"/>
    <property type="evidence" value="ECO:0000266"/>
    <property type="project" value="RGD"/>
</dbReference>
<dbReference type="GO" id="GO:0070822">
    <property type="term" value="C:Sin3-type complex"/>
    <property type="evidence" value="ECO:0000266"/>
    <property type="project" value="RGD"/>
</dbReference>
<dbReference type="GO" id="GO:0005524">
    <property type="term" value="F:ATP binding"/>
    <property type="evidence" value="ECO:0007669"/>
    <property type="project" value="UniProtKB-KW"/>
</dbReference>
<dbReference type="GO" id="GO:0008013">
    <property type="term" value="F:beta-catenin binding"/>
    <property type="evidence" value="ECO:0000266"/>
    <property type="project" value="RGD"/>
</dbReference>
<dbReference type="GO" id="GO:0042802">
    <property type="term" value="F:identical protein binding"/>
    <property type="evidence" value="ECO:0000266"/>
    <property type="project" value="RGD"/>
</dbReference>
<dbReference type="GO" id="GO:0016301">
    <property type="term" value="F:kinase activity"/>
    <property type="evidence" value="ECO:0000266"/>
    <property type="project" value="RGD"/>
</dbReference>
<dbReference type="GO" id="GO:0019888">
    <property type="term" value="F:protein phosphatase regulator activity"/>
    <property type="evidence" value="ECO:0000266"/>
    <property type="project" value="RGD"/>
</dbReference>
<dbReference type="GO" id="GO:0106310">
    <property type="term" value="F:protein serine kinase activity"/>
    <property type="evidence" value="ECO:0007669"/>
    <property type="project" value="RHEA"/>
</dbReference>
<dbReference type="GO" id="GO:0004674">
    <property type="term" value="F:protein serine/threonine kinase activity"/>
    <property type="evidence" value="ECO:0000250"/>
    <property type="project" value="UniProtKB"/>
</dbReference>
<dbReference type="GO" id="GO:0043021">
    <property type="term" value="F:ribonucleoprotein complex binding"/>
    <property type="evidence" value="ECO:0000314"/>
    <property type="project" value="RGD"/>
</dbReference>
<dbReference type="GO" id="GO:0006915">
    <property type="term" value="P:apoptotic process"/>
    <property type="evidence" value="ECO:0007669"/>
    <property type="project" value="UniProtKB-KW"/>
</dbReference>
<dbReference type="GO" id="GO:0021987">
    <property type="term" value="P:cerebral cortex development"/>
    <property type="evidence" value="ECO:0000270"/>
    <property type="project" value="RGD"/>
</dbReference>
<dbReference type="GO" id="GO:0006974">
    <property type="term" value="P:DNA damage response"/>
    <property type="evidence" value="ECO:0000266"/>
    <property type="project" value="RGD"/>
</dbReference>
<dbReference type="GO" id="GO:0006302">
    <property type="term" value="P:double-strand break repair"/>
    <property type="evidence" value="ECO:0000250"/>
    <property type="project" value="UniProtKB"/>
</dbReference>
<dbReference type="GO" id="GO:0097421">
    <property type="term" value="P:liver regeneration"/>
    <property type="evidence" value="ECO:0000270"/>
    <property type="project" value="RGD"/>
</dbReference>
<dbReference type="GO" id="GO:2001234">
    <property type="term" value="P:negative regulation of apoptotic signaling pathway"/>
    <property type="evidence" value="ECO:0000250"/>
    <property type="project" value="UniProtKB"/>
</dbReference>
<dbReference type="GO" id="GO:2000042">
    <property type="term" value="P:negative regulation of double-strand break repair via homologous recombination"/>
    <property type="evidence" value="ECO:0000250"/>
    <property type="project" value="UniProtKB"/>
</dbReference>
<dbReference type="GO" id="GO:0032435">
    <property type="term" value="P:negative regulation of proteasomal ubiquitin-dependent protein catabolic process"/>
    <property type="evidence" value="ECO:0000266"/>
    <property type="project" value="RGD"/>
</dbReference>
<dbReference type="GO" id="GO:0017148">
    <property type="term" value="P:negative regulation of translation"/>
    <property type="evidence" value="ECO:0000266"/>
    <property type="project" value="RGD"/>
</dbReference>
<dbReference type="GO" id="GO:1905337">
    <property type="term" value="P:positive regulation of aggrephagy"/>
    <property type="evidence" value="ECO:0000250"/>
    <property type="project" value="UniProtKB"/>
</dbReference>
<dbReference type="GO" id="GO:0030307">
    <property type="term" value="P:positive regulation of cell growth"/>
    <property type="evidence" value="ECO:0000250"/>
    <property type="project" value="UniProtKB"/>
</dbReference>
<dbReference type="GO" id="GO:0008284">
    <property type="term" value="P:positive regulation of cell population proliferation"/>
    <property type="evidence" value="ECO:0000250"/>
    <property type="project" value="UniProtKB"/>
</dbReference>
<dbReference type="GO" id="GO:0045732">
    <property type="term" value="P:positive regulation of protein catabolic process"/>
    <property type="evidence" value="ECO:0000250"/>
    <property type="project" value="UniProtKB"/>
</dbReference>
<dbReference type="GO" id="GO:0030177">
    <property type="term" value="P:positive regulation of Wnt signaling pathway"/>
    <property type="evidence" value="ECO:0000250"/>
    <property type="project" value="UniProtKB"/>
</dbReference>
<dbReference type="GO" id="GO:0050821">
    <property type="term" value="P:protein stabilization"/>
    <property type="evidence" value="ECO:0000266"/>
    <property type="project" value="RGD"/>
</dbReference>
<dbReference type="GO" id="GO:0051726">
    <property type="term" value="P:regulation of cell cycle"/>
    <property type="evidence" value="ECO:0000318"/>
    <property type="project" value="GO_Central"/>
</dbReference>
<dbReference type="GO" id="GO:1905818">
    <property type="term" value="P:regulation of chromosome separation"/>
    <property type="evidence" value="ECO:0000250"/>
    <property type="project" value="UniProtKB"/>
</dbReference>
<dbReference type="GO" id="GO:1903076">
    <property type="term" value="P:regulation of protein localization to plasma membrane"/>
    <property type="evidence" value="ECO:0000316"/>
    <property type="project" value="ARUK-UCL"/>
</dbReference>
<dbReference type="GO" id="GO:0033574">
    <property type="term" value="P:response to testosterone"/>
    <property type="evidence" value="ECO:0000270"/>
    <property type="project" value="RGD"/>
</dbReference>
<dbReference type="GO" id="GO:0048511">
    <property type="term" value="P:rhythmic process"/>
    <property type="evidence" value="ECO:0007669"/>
    <property type="project" value="UniProtKB-KW"/>
</dbReference>
<dbReference type="GO" id="GO:0075342">
    <property type="term" value="P:symbiont-mediated disruption of host cell PML body"/>
    <property type="evidence" value="ECO:0000266"/>
    <property type="project" value="RGD"/>
</dbReference>
<dbReference type="GO" id="GO:0016055">
    <property type="term" value="P:Wnt signaling pathway"/>
    <property type="evidence" value="ECO:0007669"/>
    <property type="project" value="UniProtKB-KW"/>
</dbReference>
<dbReference type="CDD" id="cd14132">
    <property type="entry name" value="STKc_CK2_alpha"/>
    <property type="match status" value="1"/>
</dbReference>
<dbReference type="FunFam" id="1.10.510.10:FF:000059">
    <property type="entry name" value="Casein kinase II subunit alpha"/>
    <property type="match status" value="1"/>
</dbReference>
<dbReference type="FunFam" id="3.30.200.20:FF:000088">
    <property type="entry name" value="Casein kinase II subunit alpha"/>
    <property type="match status" value="1"/>
</dbReference>
<dbReference type="Gene3D" id="3.30.200.20">
    <property type="entry name" value="Phosphorylase Kinase, domain 1"/>
    <property type="match status" value="2"/>
</dbReference>
<dbReference type="Gene3D" id="1.10.510.10">
    <property type="entry name" value="Transferase(Phosphotransferase) domain 1"/>
    <property type="match status" value="1"/>
</dbReference>
<dbReference type="InterPro" id="IPR045216">
    <property type="entry name" value="CK2_alpha"/>
</dbReference>
<dbReference type="InterPro" id="IPR011009">
    <property type="entry name" value="Kinase-like_dom_sf"/>
</dbReference>
<dbReference type="InterPro" id="IPR000719">
    <property type="entry name" value="Prot_kinase_dom"/>
</dbReference>
<dbReference type="InterPro" id="IPR017441">
    <property type="entry name" value="Protein_kinase_ATP_BS"/>
</dbReference>
<dbReference type="InterPro" id="IPR008271">
    <property type="entry name" value="Ser/Thr_kinase_AS"/>
</dbReference>
<dbReference type="PANTHER" id="PTHR24054">
    <property type="entry name" value="CASEIN KINASE II SUBUNIT ALPHA"/>
    <property type="match status" value="1"/>
</dbReference>
<dbReference type="PANTHER" id="PTHR24054:SF16">
    <property type="entry name" value="CASEIN KINASE II SUBUNIT ALPHA-RELATED"/>
    <property type="match status" value="1"/>
</dbReference>
<dbReference type="Pfam" id="PF00069">
    <property type="entry name" value="Pkinase"/>
    <property type="match status" value="1"/>
</dbReference>
<dbReference type="SMART" id="SM00220">
    <property type="entry name" value="S_TKc"/>
    <property type="match status" value="1"/>
</dbReference>
<dbReference type="SUPFAM" id="SSF56112">
    <property type="entry name" value="Protein kinase-like (PK-like)"/>
    <property type="match status" value="1"/>
</dbReference>
<dbReference type="PROSITE" id="PS00107">
    <property type="entry name" value="PROTEIN_KINASE_ATP"/>
    <property type="match status" value="1"/>
</dbReference>
<dbReference type="PROSITE" id="PS50011">
    <property type="entry name" value="PROTEIN_KINASE_DOM"/>
    <property type="match status" value="1"/>
</dbReference>
<dbReference type="PROSITE" id="PS00108">
    <property type="entry name" value="PROTEIN_KINASE_ST"/>
    <property type="match status" value="1"/>
</dbReference>
<protein>
    <recommendedName>
        <fullName>Casein kinase II subunit alpha</fullName>
        <shortName>CK II alpha</shortName>
        <ecNumber evidence="6">2.7.11.1</ecNumber>
    </recommendedName>
</protein>
<organism>
    <name type="scientific">Rattus norvegicus</name>
    <name type="common">Rat</name>
    <dbReference type="NCBI Taxonomy" id="10116"/>
    <lineage>
        <taxon>Eukaryota</taxon>
        <taxon>Metazoa</taxon>
        <taxon>Chordata</taxon>
        <taxon>Craniata</taxon>
        <taxon>Vertebrata</taxon>
        <taxon>Euteleostomi</taxon>
        <taxon>Mammalia</taxon>
        <taxon>Eutheria</taxon>
        <taxon>Euarchontoglires</taxon>
        <taxon>Glires</taxon>
        <taxon>Rodentia</taxon>
        <taxon>Myomorpha</taxon>
        <taxon>Muroidea</taxon>
        <taxon>Muridae</taxon>
        <taxon>Murinae</taxon>
        <taxon>Rattus</taxon>
    </lineage>
</organism>
<reference key="1">
    <citation type="journal article" date="1993" name="Cell. Mol. Biol. Res.">
        <title>Cloning of cDNAs encoding the alpha and beta subunits of rat casein kinase 2 (CK-2): investigation of molecular regulation of CK-2 by androgens in rat ventral prostate.</title>
        <authorList>
            <person name="Ahmed K."/>
            <person name="Davis A."/>
            <person name="Hanten J."/>
            <person name="Lambert D."/>
            <person name="McIvor R.S."/>
            <person name="Goueli S.A."/>
        </authorList>
    </citation>
    <scope>NUCLEOTIDE SEQUENCE [MRNA]</scope>
    <source>
        <tissue>Liver</tissue>
    </source>
</reference>
<reference key="2">
    <citation type="journal article" date="2004" name="Genome Res.">
        <title>The status, quality, and expansion of the NIH full-length cDNA project: the Mammalian Gene Collection (MGC).</title>
        <authorList>
            <consortium name="The MGC Project Team"/>
        </authorList>
    </citation>
    <scope>NUCLEOTIDE SEQUENCE [LARGE SCALE MRNA]</scope>
    <source>
        <tissue>Spleen</tissue>
    </source>
</reference>
<reference key="3">
    <citation type="journal article" date="1989" name="Biochemistry">
        <title>Molecular cloning of the human casein kinase II alpha subunit.</title>
        <authorList>
            <person name="Meisner H."/>
            <person name="Heller-Harrison R."/>
            <person name="Buxton J."/>
            <person name="Czech M.P."/>
        </authorList>
    </citation>
    <scope>NUCLEOTIDE SEQUENCE [MRNA] OF 8-391</scope>
</reference>
<reference key="4">
    <citation type="journal article" date="2009" name="Nat. Struct. Mol. Biol.">
        <title>CK2alpha phosphorylates BMAL1 to regulate the mammalian clock.</title>
        <authorList>
            <person name="Tamaru T."/>
            <person name="Hirayama J."/>
            <person name="Isojima Y."/>
            <person name="Nagai K."/>
            <person name="Norioka S."/>
            <person name="Takamatsu K."/>
            <person name="Sassone-Corsi P."/>
        </authorList>
    </citation>
    <scope>PROTEIN SEQUENCE OF 22-68; 90-107; 173-191; 229-244; 248-268 AND 284-306</scope>
    <scope>FUNCTION</scope>
    <scope>CATALYTIC ACTIVITY</scope>
</reference>
<reference key="5">
    <citation type="journal article" date="2002" name="Mol. Cell">
        <title>Phosphorylation by protein kinase CK2: a signaling switch for the caspase-inhibiting protein ARC.</title>
        <authorList>
            <person name="Li P.F."/>
            <person name="Li J."/>
            <person name="Mueller E.C."/>
            <person name="Otto A."/>
            <person name="Dietz R."/>
            <person name="von Harsdorf R."/>
        </authorList>
    </citation>
    <scope>FUNCTION IN APOPTOSIS</scope>
</reference>
<reference key="6">
    <citation type="journal article" date="2009" name="Chin. Sci. Bull.">
        <title>Crystal structures of catalytic and regulatory subunits of rat protein kinase CK2.</title>
        <authorList>
            <person name="Zhou W."/>
            <person name="Qin X."/>
            <person name="Yan X."/>
            <person name="Xie X."/>
            <person name="Li L."/>
            <person name="Fang S."/>
            <person name="Long J."/>
            <person name="Adelman J."/>
            <person name="Tang W.-J."/>
            <person name="Shen Y."/>
        </authorList>
    </citation>
    <scope>X-RAY CRYSTALLOGRAPHY (3.0 ANGSTROMS) OF 1-335</scope>
</reference>
<feature type="chain" id="PRO_0000085886" description="Casein kinase II subunit alpha">
    <location>
        <begin position="1"/>
        <end position="391"/>
    </location>
</feature>
<feature type="domain" description="Protein kinase" evidence="3">
    <location>
        <begin position="39"/>
        <end position="324"/>
    </location>
</feature>
<feature type="region of interest" description="Interaction with beta subunit">
    <location>
        <begin position="36"/>
        <end position="41"/>
    </location>
</feature>
<feature type="active site" description="Proton acceptor" evidence="3 4">
    <location>
        <position position="156"/>
    </location>
</feature>
<feature type="binding site" evidence="3">
    <location>
        <begin position="45"/>
        <end position="53"/>
    </location>
    <ligand>
        <name>ATP</name>
        <dbReference type="ChEBI" id="CHEBI:30616"/>
    </ligand>
</feature>
<feature type="binding site" evidence="3">
    <location>
        <position position="68"/>
    </location>
    <ligand>
        <name>ATP</name>
        <dbReference type="ChEBI" id="CHEBI:30616"/>
    </ligand>
</feature>
<feature type="modified residue" description="Phosphothreonine; by CDK1" evidence="2">
    <location>
        <position position="344"/>
    </location>
</feature>
<feature type="modified residue" description="Phosphothreonine; by CDK1" evidence="2">
    <location>
        <position position="360"/>
    </location>
</feature>
<feature type="modified residue" description="Phosphoserine; by CDK1" evidence="2">
    <location>
        <position position="362"/>
    </location>
</feature>
<feature type="modified residue" description="Phosphoserine; by CDK1" evidence="2">
    <location>
        <position position="370"/>
    </location>
</feature>
<feature type="strand" evidence="7">
    <location>
        <begin position="10"/>
        <end position="12"/>
    </location>
</feature>
<feature type="turn" evidence="7">
    <location>
        <begin position="15"/>
        <end position="18"/>
    </location>
</feature>
<feature type="helix" evidence="7">
    <location>
        <begin position="21"/>
        <end position="24"/>
    </location>
</feature>
<feature type="helix" evidence="7">
    <location>
        <begin position="26"/>
        <end position="28"/>
    </location>
</feature>
<feature type="helix" evidence="7">
    <location>
        <begin position="36"/>
        <end position="38"/>
    </location>
</feature>
<feature type="strand" evidence="7">
    <location>
        <begin position="39"/>
        <end position="43"/>
    </location>
</feature>
<feature type="strand" evidence="7">
    <location>
        <begin position="52"/>
        <end position="58"/>
    </location>
</feature>
<feature type="turn" evidence="7">
    <location>
        <begin position="59"/>
        <end position="61"/>
    </location>
</feature>
<feature type="strand" evidence="7">
    <location>
        <begin position="64"/>
        <end position="69"/>
    </location>
</feature>
<feature type="helix" evidence="7">
    <location>
        <begin position="75"/>
        <end position="88"/>
    </location>
</feature>
<feature type="strand" evidence="7">
    <location>
        <begin position="97"/>
        <end position="102"/>
    </location>
</feature>
<feature type="strand" evidence="7">
    <location>
        <begin position="109"/>
        <end position="114"/>
    </location>
</feature>
<feature type="helix" evidence="7">
    <location>
        <begin position="122"/>
        <end position="125"/>
    </location>
</feature>
<feature type="helix" evidence="7">
    <location>
        <begin position="130"/>
        <end position="149"/>
    </location>
</feature>
<feature type="helix" evidence="7">
    <location>
        <begin position="159"/>
        <end position="161"/>
    </location>
</feature>
<feature type="strand" evidence="7">
    <location>
        <begin position="162"/>
        <end position="165"/>
    </location>
</feature>
<feature type="turn" evidence="7">
    <location>
        <begin position="166"/>
        <end position="169"/>
    </location>
</feature>
<feature type="strand" evidence="7">
    <location>
        <begin position="170"/>
        <end position="173"/>
    </location>
</feature>
<feature type="helix" evidence="7">
    <location>
        <begin position="195"/>
        <end position="197"/>
    </location>
</feature>
<feature type="helix" evidence="7">
    <location>
        <begin position="200"/>
        <end position="203"/>
    </location>
</feature>
<feature type="helix" evidence="7">
    <location>
        <begin position="212"/>
        <end position="226"/>
    </location>
</feature>
<feature type="strand" evidence="7">
    <location>
        <begin position="230"/>
        <end position="233"/>
    </location>
</feature>
<feature type="helix" evidence="7">
    <location>
        <begin position="240"/>
        <end position="249"/>
    </location>
</feature>
<feature type="helix" evidence="7">
    <location>
        <begin position="251"/>
        <end position="260"/>
    </location>
</feature>
<feature type="helix" evidence="7">
    <location>
        <begin position="267"/>
        <end position="271"/>
    </location>
</feature>
<feature type="helix" evidence="7">
    <location>
        <begin position="281"/>
        <end position="284"/>
    </location>
</feature>
<feature type="turn" evidence="7">
    <location>
        <begin position="287"/>
        <end position="292"/>
    </location>
</feature>
<feature type="helix" evidence="7">
    <location>
        <begin position="295"/>
        <end position="304"/>
    </location>
</feature>
<feature type="helix" evidence="7">
    <location>
        <begin position="309"/>
        <end position="311"/>
    </location>
</feature>
<feature type="helix" evidence="7">
    <location>
        <begin position="315"/>
        <end position="319"/>
    </location>
</feature>
<feature type="helix" evidence="7">
    <location>
        <begin position="322"/>
        <end position="324"/>
    </location>
</feature>
<feature type="helix" evidence="7">
    <location>
        <begin position="325"/>
        <end position="328"/>
    </location>
</feature>
<gene>
    <name type="primary">Csnk2a1</name>
</gene>
<proteinExistence type="evidence at protein level"/>
<evidence type="ECO:0000250" key="1"/>
<evidence type="ECO:0000250" key="2">
    <source>
        <dbReference type="UniProtKB" id="P68400"/>
    </source>
</evidence>
<evidence type="ECO:0000255" key="3">
    <source>
        <dbReference type="PROSITE-ProRule" id="PRU00159"/>
    </source>
</evidence>
<evidence type="ECO:0000255" key="4">
    <source>
        <dbReference type="PROSITE-ProRule" id="PRU10027"/>
    </source>
</evidence>
<evidence type="ECO:0000269" key="5">
    <source>
    </source>
</evidence>
<evidence type="ECO:0000269" key="6">
    <source>
    </source>
</evidence>
<evidence type="ECO:0007829" key="7">
    <source>
        <dbReference type="PDB" id="2R7I"/>
    </source>
</evidence>
<comment type="function">
    <text evidence="2 5 6">Catalytic subunit of a constitutively active serine/threonine-protein kinase complex that phosphorylates a large number of substrates containing acidic residues C-terminal to the phosphorylated serine or threonine (By similarity). Regulates numerous cellular processes, such as cell cycle progression, apoptosis and transcription, as well as viral infection (By similarity). May act as a regulatory node which integrates and coordinates numerous signals leading to an appropriate cellular response (By similarity). During mitosis, functions as a component of the p53/TP53-dependent spindle assembly checkpoint (SAC) that maintains cyclin-B-CDK1 activity and G2 arrest in response to spindle damage (By similarity). Also required for p53/TP53-mediated apoptosis, phosphorylating 'Ser-392' of p53/TP53 following UV irradiation (By similarity). Phosphorylates a number of DNA repair proteins in response to DNA damage, such as MDC1, MRE11, RAD9A, RAD51 and HTATSF1, promoting their recruitment to DNA damage sites (By similarity). Can also negatively regulate apoptosis (PubMed:12191471). Phosphorylates the caspases CASP9 and CASP2 and the apoptotic regulator NOL3 (PubMed:12191471). Phosphorylation protects CASP9 from cleavage and activation by CASP8, and inhibits the dimerization of CASP2 and activation of CASP8 (PubMed:12191471). Phosphorylates YY1, protecting YY1 from cleavage by CASP7 during apoptosis (By similarity). Regulates transcription by direct phosphorylation of RNA polymerases I, II, III and IV (By similarity). Also phosphorylates and regulates numerous transcription factors including NF-kappa-B, STAT1, CREB1, IRF1, IRF2, ATF1, ATF4, SRF, MAX, JUN, FOS, MYC and MYB (By similarity). Phosphorylates Hsp90 and its co-chaperones FKBP4 and CDC37, which is essential for chaperone function (By similarity). Mediates sequential phosphorylation of FNIP1, promoting its gradual interaction with Hsp90, leading to activate both kinase and non-kinase client proteins of Hsp90 (By similarity). Regulates Wnt signaling by phosphorylating CTNNB1 and the transcription factor LEF1 (By similarity). Acts as an ectokinase that phosphorylates several extracellular proteins (By similarity). Phosphorylates PML at 'Ser-565' and primes it for ubiquitin-mediated degradation (By similarity). Plays an important role in the circadian clock function by phosphorylating BMAL1 at 'Ser-90' which is pivotal for its interaction with CLOCK and which controls CLOCK nuclear entry (PubMed:19330005). Phosphorylates FMR1, promoting FMR1-dependent formation of a membraneless compartment (By similarity). May phosphorylate histone H2A on 'Ser-1' (By similarity).</text>
</comment>
<comment type="catalytic activity">
    <reaction evidence="6">
        <text>L-seryl-[protein] + ATP = O-phospho-L-seryl-[protein] + ADP + H(+)</text>
        <dbReference type="Rhea" id="RHEA:17989"/>
        <dbReference type="Rhea" id="RHEA-COMP:9863"/>
        <dbReference type="Rhea" id="RHEA-COMP:11604"/>
        <dbReference type="ChEBI" id="CHEBI:15378"/>
        <dbReference type="ChEBI" id="CHEBI:29999"/>
        <dbReference type="ChEBI" id="CHEBI:30616"/>
        <dbReference type="ChEBI" id="CHEBI:83421"/>
        <dbReference type="ChEBI" id="CHEBI:456216"/>
        <dbReference type="EC" id="2.7.11.1"/>
    </reaction>
    <physiologicalReaction direction="left-to-right" evidence="6">
        <dbReference type="Rhea" id="RHEA:17990"/>
    </physiologicalReaction>
</comment>
<comment type="catalytic activity">
    <reaction evidence="6">
        <text>L-threonyl-[protein] + ATP = O-phospho-L-threonyl-[protein] + ADP + H(+)</text>
        <dbReference type="Rhea" id="RHEA:46608"/>
        <dbReference type="Rhea" id="RHEA-COMP:11060"/>
        <dbReference type="Rhea" id="RHEA-COMP:11605"/>
        <dbReference type="ChEBI" id="CHEBI:15378"/>
        <dbReference type="ChEBI" id="CHEBI:30013"/>
        <dbReference type="ChEBI" id="CHEBI:30616"/>
        <dbReference type="ChEBI" id="CHEBI:61977"/>
        <dbReference type="ChEBI" id="CHEBI:456216"/>
        <dbReference type="EC" id="2.7.11.1"/>
    </reaction>
</comment>
<comment type="activity regulation">
    <text evidence="1">Constitutively active protein kinase whose activity is not directly affected by phosphorylation. Seems to be regulated by level of expression and localization (By similarity).</text>
</comment>
<comment type="subunit">
    <text evidence="2">Heterotetramer composed of two catalytic subunits (alpha chain and/or alpha' chain) and two regulatory subunits (beta chains). The tetramer can exist as a combination of 2 alpha/2 beta, 2 alpha'/2 beta or 1 alpha/1 alpha'/2 beta subunits. Also part of a CK2-SPT16-SSRP1 complex composed of SSRP1, SUPT16H, CSNK2A1, CSNK2A2 and CSNK2B, which forms following UV irradiation. Interacts with RNPS1. Interacts with SNAI1. Interacts with PML. Interacts with CCAR2. Interacts with HIRIP3 (By similarity).</text>
</comment>
<comment type="subcellular location">
    <subcellularLocation>
        <location evidence="2">Nucleus</location>
    </subcellularLocation>
</comment>
<comment type="PTM">
    <text evidence="1">Phosphorylated at Thr-344, Thr-360, Ser-362 and Ser-370 by CDK1 in prophase and metaphase and dephosphorylated during anaphase. Phosphorylation does not directly affect casein kinase 2 activity, but may contribute to its regulation by forming binding sites for interacting proteins and/or targeting it to different compartments (By similarity).</text>
</comment>
<comment type="miscellaneous">
    <text>Can use both ATP and GTP as phosphoryl donors. Phosphorylation by casein kinase 2 has been estimated to represent up to one quarter of the eukaryotic phosphoproteome.</text>
</comment>
<comment type="similarity">
    <text evidence="3">Belongs to the protein kinase superfamily. Ser/Thr protein kinase family. CK2 subfamily.</text>
</comment>
<accession>P19139</accession>
<accession>Q5BKC1</accession>